<organism>
    <name type="scientific">Escherichia coli O1:K1 / APEC</name>
    <dbReference type="NCBI Taxonomy" id="405955"/>
    <lineage>
        <taxon>Bacteria</taxon>
        <taxon>Pseudomonadati</taxon>
        <taxon>Pseudomonadota</taxon>
        <taxon>Gammaproteobacteria</taxon>
        <taxon>Enterobacterales</taxon>
        <taxon>Enterobacteriaceae</taxon>
        <taxon>Escherichia</taxon>
    </lineage>
</organism>
<keyword id="KW-1185">Reference proteome</keyword>
<keyword id="KW-0732">Signal</keyword>
<dbReference type="EMBL" id="CP000468">
    <property type="protein sequence ID" value="ABJ03498.1"/>
    <property type="molecule type" value="Genomic_DNA"/>
</dbReference>
<dbReference type="RefSeq" id="WP_001699224.1">
    <property type="nucleotide sequence ID" value="NZ_CADILS010000008.1"/>
</dbReference>
<dbReference type="KEGG" id="ecv:APECO1_2438"/>
<dbReference type="HOGENOM" id="CLU_2553093_0_0_6"/>
<dbReference type="Proteomes" id="UP000008216">
    <property type="component" value="Chromosome"/>
</dbReference>
<dbReference type="InterPro" id="IPR031382">
    <property type="entry name" value="YjbT"/>
</dbReference>
<dbReference type="Pfam" id="PF17089">
    <property type="entry name" value="YjbT"/>
    <property type="match status" value="1"/>
</dbReference>
<comment type="similarity">
    <text evidence="3">Belongs to the YjbT family.</text>
</comment>
<gene>
    <name type="primary">yjbT</name>
    <name type="ordered locus">Ecok1_40040</name>
    <name type="ORF">APECO1_2438</name>
</gene>
<feature type="signal peptide" evidence="1">
    <location>
        <begin position="1"/>
        <end position="29"/>
    </location>
</feature>
<feature type="chain" id="PRO_0000311866" description="Uncharacterized protein YjbT">
    <location>
        <begin position="30"/>
        <end position="92"/>
    </location>
</feature>
<feature type="region of interest" description="Disordered" evidence="2">
    <location>
        <begin position="36"/>
        <end position="62"/>
    </location>
</feature>
<feature type="compositionally biased region" description="Polar residues" evidence="2">
    <location>
        <begin position="41"/>
        <end position="55"/>
    </location>
</feature>
<accession>A1AIK8</accession>
<evidence type="ECO:0000255" key="1"/>
<evidence type="ECO:0000256" key="2">
    <source>
        <dbReference type="SAM" id="MobiDB-lite"/>
    </source>
</evidence>
<evidence type="ECO:0000305" key="3"/>
<sequence length="92" mass="10099">MKRNLIKVVKMKSYFAALMLSVSVLPAYAGPLGTADKADLPQSNVSSPMMAQSLRQPDLQPISTDRKTECFRLYTPDRKPGVNYVPDGSTGH</sequence>
<reference key="1">
    <citation type="journal article" date="2007" name="J. Bacteriol.">
        <title>The genome sequence of avian pathogenic Escherichia coli strain O1:K1:H7 shares strong similarities with human extraintestinal pathogenic E. coli genomes.</title>
        <authorList>
            <person name="Johnson T.J."/>
            <person name="Kariyawasam S."/>
            <person name="Wannemuehler Y."/>
            <person name="Mangiamele P."/>
            <person name="Johnson S.J."/>
            <person name="Doetkott C."/>
            <person name="Skyberg J.A."/>
            <person name="Lynne A.M."/>
            <person name="Johnson J.R."/>
            <person name="Nolan L.K."/>
        </authorList>
    </citation>
    <scope>NUCLEOTIDE SEQUENCE [LARGE SCALE GENOMIC DNA]</scope>
</reference>
<name>YJBT_ECOK1</name>
<proteinExistence type="inferred from homology"/>
<protein>
    <recommendedName>
        <fullName>Uncharacterized protein YjbT</fullName>
    </recommendedName>
</protein>